<organism>
    <name type="scientific">Synechococcus elongatus (strain ATCC 33912 / PCC 7942 / FACHB-805)</name>
    <name type="common">Anacystis nidulans R2</name>
    <dbReference type="NCBI Taxonomy" id="1140"/>
    <lineage>
        <taxon>Bacteria</taxon>
        <taxon>Bacillati</taxon>
        <taxon>Cyanobacteriota</taxon>
        <taxon>Cyanophyceae</taxon>
        <taxon>Synechococcales</taxon>
        <taxon>Synechococcaceae</taxon>
        <taxon>Synechococcus</taxon>
    </lineage>
</organism>
<protein>
    <recommendedName>
        <fullName>C-phycocyanin beta subunit</fullName>
    </recommendedName>
</protein>
<sequence length="173" mass="18270">MTFDAFTKVVAQADARGEFLSDAQLDALSRLVAEGNKRIDTVNRITGNASSIVANAARALFAEQPSLIAPGGNAYTNRRMAACLRDMEIILRYVTYAVFTGDASILDDRCLNGLRETYLALGVPGASVAEGVRKMKDAAVAIVSDRNGITQGDCSAIISELGSYFDKAAAAVA</sequence>
<proteinExistence type="evidence at protein level"/>
<keyword id="KW-0002">3D-structure</keyword>
<keyword id="KW-0042">Antenna complex</keyword>
<keyword id="KW-0089">Bile pigment</keyword>
<keyword id="KW-0157">Chromophore</keyword>
<keyword id="KW-0249">Electron transport</keyword>
<keyword id="KW-0472">Membrane</keyword>
<keyword id="KW-0488">Methylation</keyword>
<keyword id="KW-0602">Photosynthesis</keyword>
<keyword id="KW-0605">Phycobilisome</keyword>
<keyword id="KW-1185">Reference proteome</keyword>
<keyword id="KW-0793">Thylakoid</keyword>
<keyword id="KW-0813">Transport</keyword>
<evidence type="ECO:0000250" key="1"/>
<evidence type="ECO:0000269" key="2">
    <source>
    </source>
</evidence>
<evidence type="ECO:0000305" key="3"/>
<evidence type="ECO:0000305" key="4">
    <source>
    </source>
</evidence>
<evidence type="ECO:0007744" key="5">
    <source>
        <dbReference type="PDB" id="4H0M"/>
    </source>
</evidence>
<evidence type="ECO:0007829" key="6">
    <source>
        <dbReference type="PDB" id="7D6W"/>
    </source>
</evidence>
<reference key="1">
    <citation type="journal article" date="1987" name="Nucleic Acids Res.">
        <title>Nucleotide sequence of phycocyanin beta-subunit gene of cyanobacterium Anacystis nidulans strain R2.</title>
        <authorList>
            <person name="Lau P.C.K."/>
            <person name="Condie A."/>
            <person name="Alvarado-Urbina G."/>
            <person name="Lau R.H."/>
        </authorList>
    </citation>
    <scope>NUCLEOTIDE SEQUENCE [GENOMIC DNA]</scope>
</reference>
<reference key="2">
    <citation type="journal article" date="1988" name="J. Bacteriol.">
        <title>Transcriptional organization of the phycocyanin subunit gene clusters of the cyanobacterium Anacystis nidulans UTEX 625.</title>
        <authorList>
            <person name="Kalla R.S."/>
            <person name="Lind L.K."/>
            <person name="Lidholm J."/>
            <person name="Gustafsson P."/>
        </authorList>
    </citation>
    <scope>NUCLEOTIDE SEQUENCE [GENOMIC DNA]</scope>
</reference>
<reference key="3">
    <citation type="submission" date="2005-08" db="EMBL/GenBank/DDBJ databases">
        <title>Complete sequence of chromosome 1 of Synechococcus elongatus PCC 7942.</title>
        <authorList>
            <consortium name="US DOE Joint Genome Institute"/>
            <person name="Copeland A."/>
            <person name="Lucas S."/>
            <person name="Lapidus A."/>
            <person name="Barry K."/>
            <person name="Detter J.C."/>
            <person name="Glavina T."/>
            <person name="Hammon N."/>
            <person name="Israni S."/>
            <person name="Pitluck S."/>
            <person name="Schmutz J."/>
            <person name="Larimer F."/>
            <person name="Land M."/>
            <person name="Kyrpides N."/>
            <person name="Lykidis A."/>
            <person name="Golden S."/>
            <person name="Richardson P."/>
        </authorList>
    </citation>
    <scope>NUCLEOTIDE SEQUENCE [LARGE SCALE GENOMIC DNA]</scope>
    <source>
        <strain>ATCC 33912 / PCC 7942 / FACHB-805</strain>
    </source>
</reference>
<reference key="4">
    <citation type="journal article" date="1987" name="Gene">
        <title>Phycocyanin alpha-subunit gene of Anacystis nidulans R2: cloning, nucleotide sequencing and expression in Escherichia coli.</title>
        <authorList>
            <person name="Lau R.H."/>
            <person name="Alvarado-Urbina G."/>
            <person name="Lau P.C.K."/>
        </authorList>
    </citation>
    <scope>NUCLEOTIDE SEQUENCE [GENOMIC DNA] OF 171-173</scope>
</reference>
<reference evidence="5" key="5">
    <citation type="journal article" date="2013" name="Biochim. Biophys. Acta">
        <title>Allophycocyanin and phycocyanin crystal structures reveal facets of phycobilisome assembly.</title>
        <authorList>
            <person name="Marx A."/>
            <person name="Adir N."/>
        </authorList>
    </citation>
    <scope>X-RAY CRYSTALLOGRAPHY (2.20 ANGSTROMS) IN COMPLEX WITH PHYCOCYANOBILIN CHROMOPHORE</scope>
    <scope>PROBABLE REMOVAL OF N-TERMINAL METHIONINE</scope>
    <scope>SUBUNIT</scope>
    <scope>METHYLATION AT ASN-73</scope>
    <source>
        <strain>ATCC 33912 / PCC 7942 / FACHB-805</strain>
    </source>
</reference>
<name>PHCB_SYNE7</name>
<accession>P06539</accession>
<accession>Q31PD7</accession>
<accession>Q57358</accession>
<gene>
    <name type="primary">cpcB1</name>
    <name type="synonym">cpcB</name>
    <name type="ordered locus">Synpcc7942_1047</name>
</gene>
<gene>
    <name type="primary">cpcB2</name>
    <name type="ordered locus">Synpcc7942_1052</name>
</gene>
<comment type="function">
    <text>Light-harvesting photosynthetic bile pigment-protein from the phycobiliprotein complex (phycobilisome, PBS). Phycocyanin is the major phycobiliprotein in the PBS rod.</text>
</comment>
<comment type="subunit">
    <text evidence="2 5">Heterodimer of an alpha and a beta subunit, which further assembles into trimers and the trimers into hexamers.</text>
</comment>
<comment type="subcellular location">
    <subcellularLocation>
        <location evidence="1">Cellular thylakoid membrane</location>
        <topology evidence="1">Peripheral membrane protein</topology>
        <orientation evidence="1">Cytoplasmic side</orientation>
    </subcellularLocation>
    <text evidence="1">Part of the phycobilisome rod.</text>
</comment>
<comment type="PTM">
    <text evidence="2">Contains two covalently linked bilin chromophores.</text>
</comment>
<comment type="similarity">
    <text evidence="3">Belongs to the phycobiliprotein family.</text>
</comment>
<dbReference type="EMBL" id="X04916">
    <property type="protein sequence ID" value="CAA28585.1"/>
    <property type="molecule type" value="Genomic_DNA"/>
</dbReference>
<dbReference type="EMBL" id="M94218">
    <property type="protein sequence ID" value="AAA64531.1"/>
    <property type="molecule type" value="Genomic_DNA"/>
</dbReference>
<dbReference type="EMBL" id="CP000100">
    <property type="protein sequence ID" value="ABB57077.1"/>
    <property type="molecule type" value="Genomic_DNA"/>
</dbReference>
<dbReference type="EMBL" id="CP000100">
    <property type="protein sequence ID" value="ABB57082.1"/>
    <property type="molecule type" value="Genomic_DNA"/>
</dbReference>
<dbReference type="EMBL" id="M16325">
    <property type="status" value="NOT_ANNOTATED_CDS"/>
    <property type="molecule type" value="Genomic_DNA"/>
</dbReference>
<dbReference type="EMBL" id="AH000853">
    <property type="protein sequence ID" value="AAA21759.1"/>
    <property type="molecule type" value="Genomic_DNA"/>
</dbReference>
<dbReference type="EMBL" id="AH000853">
    <property type="protein sequence ID" value="AAA21760.1"/>
    <property type="molecule type" value="Genomic_DNA"/>
</dbReference>
<dbReference type="PIR" id="A26577">
    <property type="entry name" value="CFYCB"/>
</dbReference>
<dbReference type="RefSeq" id="WP_011242808.1">
    <property type="nucleotide sequence ID" value="NZ_JACJTX010000003.1"/>
</dbReference>
<dbReference type="PDB" id="4H0M">
    <property type="method" value="X-ray"/>
    <property type="resolution" value="2.20 A"/>
    <property type="chains" value="B/D/F/H/J/L/N/P/R/T/V/X=1-173"/>
</dbReference>
<dbReference type="PDB" id="7D6W">
    <property type="method" value="X-ray"/>
    <property type="resolution" value="2.15 A"/>
    <property type="chains" value="B/D/F/H/J/L=2-173"/>
</dbReference>
<dbReference type="PDBsum" id="4H0M"/>
<dbReference type="PDBsum" id="7D6W"/>
<dbReference type="SMR" id="P06539"/>
<dbReference type="STRING" id="1140.Synpcc7942_1047"/>
<dbReference type="iPTMnet" id="P06539"/>
<dbReference type="PaxDb" id="1140-Synpcc7942_1047"/>
<dbReference type="KEGG" id="syf:Synpcc7942_1047"/>
<dbReference type="KEGG" id="syf:Synpcc7942_1052"/>
<dbReference type="eggNOG" id="ENOG502Z7NE">
    <property type="taxonomic scope" value="Bacteria"/>
</dbReference>
<dbReference type="HOGENOM" id="CLU_104219_0_0_3"/>
<dbReference type="OrthoDB" id="512145at2"/>
<dbReference type="BioCyc" id="MetaCyc:SYNPCC7942_1047-MONOMER"/>
<dbReference type="BioCyc" id="SYNEL:SYNPCC7942_1047-MONOMER"/>
<dbReference type="EvolutionaryTrace" id="P06539"/>
<dbReference type="Proteomes" id="UP000889800">
    <property type="component" value="Chromosome"/>
</dbReference>
<dbReference type="GO" id="GO:0030089">
    <property type="term" value="C:phycobilisome"/>
    <property type="evidence" value="ECO:0007669"/>
    <property type="project" value="UniProtKB-KW"/>
</dbReference>
<dbReference type="GO" id="GO:0031676">
    <property type="term" value="C:plasma membrane-derived thylakoid membrane"/>
    <property type="evidence" value="ECO:0007669"/>
    <property type="project" value="UniProtKB-SubCell"/>
</dbReference>
<dbReference type="GO" id="GO:0015979">
    <property type="term" value="P:photosynthesis"/>
    <property type="evidence" value="ECO:0007669"/>
    <property type="project" value="UniProtKB-KW"/>
</dbReference>
<dbReference type="CDD" id="cd14768">
    <property type="entry name" value="PC_PEC_beta"/>
    <property type="match status" value="1"/>
</dbReference>
<dbReference type="Gene3D" id="1.10.490.20">
    <property type="entry name" value="Phycocyanins"/>
    <property type="match status" value="1"/>
</dbReference>
<dbReference type="InterPro" id="IPR009050">
    <property type="entry name" value="Globin-like_sf"/>
</dbReference>
<dbReference type="InterPro" id="IPR012128">
    <property type="entry name" value="Phycobilisome_asu/bsu"/>
</dbReference>
<dbReference type="InterPro" id="IPR038719">
    <property type="entry name" value="Phycobilisome_asu/bsu_sf"/>
</dbReference>
<dbReference type="InterPro" id="IPR006247">
    <property type="entry name" value="Phycocyanin_b"/>
</dbReference>
<dbReference type="NCBIfam" id="TIGR01339">
    <property type="entry name" value="phycocy_beta"/>
    <property type="match status" value="1"/>
</dbReference>
<dbReference type="PANTHER" id="PTHR34011:SF7">
    <property type="entry name" value="C-PHYCOCYANIN BETA SUBUNIT"/>
    <property type="match status" value="1"/>
</dbReference>
<dbReference type="PANTHER" id="PTHR34011">
    <property type="entry name" value="PHYCOBILISOME 32.1 KDA LINKER POLYPEPTIDE, PHYCOCYANIN-ASSOCIATED, ROD 2-RELATED"/>
    <property type="match status" value="1"/>
</dbReference>
<dbReference type="Pfam" id="PF00502">
    <property type="entry name" value="Phycobilisome"/>
    <property type="match status" value="1"/>
</dbReference>
<dbReference type="PIRSF" id="PIRSF000081">
    <property type="entry name" value="Phycocyanin"/>
    <property type="match status" value="1"/>
</dbReference>
<dbReference type="SUPFAM" id="SSF46458">
    <property type="entry name" value="Globin-like"/>
    <property type="match status" value="1"/>
</dbReference>
<feature type="initiator methionine" description="Removed" evidence="4">
    <location>
        <position position="1"/>
    </location>
</feature>
<feature type="chain" id="PRO_0000199160" description="C-phycocyanin beta subunit">
    <location>
        <begin position="2"/>
        <end position="173"/>
    </location>
</feature>
<feature type="binding site" description="covalent" evidence="2 5">
    <location>
        <position position="83"/>
    </location>
    <ligand>
        <name>(2R,3E)-phycocyanobilin</name>
        <dbReference type="ChEBI" id="CHEBI:85275"/>
        <label>1</label>
    </ligand>
</feature>
<feature type="binding site" description="covalent" evidence="2 5">
    <location>
        <position position="154"/>
    </location>
    <ligand>
        <name>(2R,3E)-phycocyanobilin</name>
        <dbReference type="ChEBI" id="CHEBI:85275"/>
        <label>2</label>
    </ligand>
</feature>
<feature type="modified residue" description="N4-methylasparagine" evidence="2 5">
    <location>
        <position position="73"/>
    </location>
</feature>
<feature type="helix" evidence="6">
    <location>
        <begin position="5"/>
        <end position="15"/>
    </location>
</feature>
<feature type="helix" evidence="6">
    <location>
        <begin position="22"/>
        <end position="33"/>
    </location>
</feature>
<feature type="helix" evidence="6">
    <location>
        <begin position="35"/>
        <end position="47"/>
    </location>
</feature>
<feature type="helix" evidence="6">
    <location>
        <begin position="49"/>
        <end position="63"/>
    </location>
</feature>
<feature type="helix" evidence="6">
    <location>
        <begin position="65"/>
        <end position="67"/>
    </location>
</feature>
<feature type="helix" evidence="6">
    <location>
        <begin position="77"/>
        <end position="100"/>
    </location>
</feature>
<feature type="helix" evidence="6">
    <location>
        <begin position="104"/>
        <end position="109"/>
    </location>
</feature>
<feature type="turn" evidence="6">
    <location>
        <begin position="110"/>
        <end position="113"/>
    </location>
</feature>
<feature type="helix" evidence="6">
    <location>
        <begin position="114"/>
        <end position="121"/>
    </location>
</feature>
<feature type="helix" evidence="6">
    <location>
        <begin position="125"/>
        <end position="144"/>
    </location>
</feature>
<feature type="helix" evidence="6">
    <location>
        <begin position="155"/>
        <end position="172"/>
    </location>
</feature>